<accession>Q73GE2</accession>
<sequence length="205" mass="23691">MTEWLISNQLIDYNCAVKSMEEKIQQIHNNSADELVWLLQHPPLYTAGISATADDIVEKLFPIYKTGRGGKHTYHGPGQRIIYLMLNLKKRNKCDIKLYIRDLSKWIINVLKQFNILGEFREDRIGIWVNHNGVEKKIAAFGIRLRKWVTYHGIALNVFPDLSHYKGIIPCGLQGYGVTSMEELGVKVPLSELDDILKKEFYKIF</sequence>
<dbReference type="EC" id="2.3.1.181" evidence="1"/>
<dbReference type="EMBL" id="AE017196">
    <property type="protein sequence ID" value="AAS14674.1"/>
    <property type="molecule type" value="Genomic_DNA"/>
</dbReference>
<dbReference type="RefSeq" id="WP_010081985.1">
    <property type="nucleotide sequence ID" value="NZ_OX384529.1"/>
</dbReference>
<dbReference type="SMR" id="Q73GE2"/>
<dbReference type="EnsemblBacteria" id="AAS14674">
    <property type="protein sequence ID" value="AAS14674"/>
    <property type="gene ID" value="WD_1014"/>
</dbReference>
<dbReference type="GeneID" id="70036494"/>
<dbReference type="KEGG" id="wol:WD_1014"/>
<dbReference type="eggNOG" id="COG0321">
    <property type="taxonomic scope" value="Bacteria"/>
</dbReference>
<dbReference type="UniPathway" id="UPA00538">
    <property type="reaction ID" value="UER00592"/>
</dbReference>
<dbReference type="Proteomes" id="UP000008215">
    <property type="component" value="Chromosome"/>
</dbReference>
<dbReference type="GO" id="GO:0005737">
    <property type="term" value="C:cytoplasm"/>
    <property type="evidence" value="ECO:0007669"/>
    <property type="project" value="UniProtKB-SubCell"/>
</dbReference>
<dbReference type="GO" id="GO:0033819">
    <property type="term" value="F:lipoyl(octanoyl) transferase activity"/>
    <property type="evidence" value="ECO:0007669"/>
    <property type="project" value="UniProtKB-EC"/>
</dbReference>
<dbReference type="GO" id="GO:0036211">
    <property type="term" value="P:protein modification process"/>
    <property type="evidence" value="ECO:0007669"/>
    <property type="project" value="InterPro"/>
</dbReference>
<dbReference type="CDD" id="cd16444">
    <property type="entry name" value="LipB"/>
    <property type="match status" value="1"/>
</dbReference>
<dbReference type="Gene3D" id="3.30.930.10">
    <property type="entry name" value="Bira Bifunctional Protein, Domain 2"/>
    <property type="match status" value="1"/>
</dbReference>
<dbReference type="HAMAP" id="MF_00013">
    <property type="entry name" value="LipB"/>
    <property type="match status" value="1"/>
</dbReference>
<dbReference type="InterPro" id="IPR045864">
    <property type="entry name" value="aa-tRNA-synth_II/BPL/LPL"/>
</dbReference>
<dbReference type="InterPro" id="IPR004143">
    <property type="entry name" value="BPL_LPL_catalytic"/>
</dbReference>
<dbReference type="InterPro" id="IPR000544">
    <property type="entry name" value="Octanoyltransferase"/>
</dbReference>
<dbReference type="InterPro" id="IPR020605">
    <property type="entry name" value="Octanoyltransferase_CS"/>
</dbReference>
<dbReference type="NCBIfam" id="TIGR00214">
    <property type="entry name" value="lipB"/>
    <property type="match status" value="1"/>
</dbReference>
<dbReference type="NCBIfam" id="NF010921">
    <property type="entry name" value="PRK14341.1"/>
    <property type="match status" value="1"/>
</dbReference>
<dbReference type="PANTHER" id="PTHR10993:SF7">
    <property type="entry name" value="LIPOYLTRANSFERASE 2, MITOCHONDRIAL-RELATED"/>
    <property type="match status" value="1"/>
</dbReference>
<dbReference type="PANTHER" id="PTHR10993">
    <property type="entry name" value="OCTANOYLTRANSFERASE"/>
    <property type="match status" value="1"/>
</dbReference>
<dbReference type="Pfam" id="PF21948">
    <property type="entry name" value="LplA-B_cat"/>
    <property type="match status" value="1"/>
</dbReference>
<dbReference type="PIRSF" id="PIRSF016262">
    <property type="entry name" value="LPLase"/>
    <property type="match status" value="1"/>
</dbReference>
<dbReference type="SUPFAM" id="SSF55681">
    <property type="entry name" value="Class II aaRS and biotin synthetases"/>
    <property type="match status" value="1"/>
</dbReference>
<dbReference type="PROSITE" id="PS51733">
    <property type="entry name" value="BPL_LPL_CATALYTIC"/>
    <property type="match status" value="1"/>
</dbReference>
<dbReference type="PROSITE" id="PS01313">
    <property type="entry name" value="LIPB"/>
    <property type="match status" value="1"/>
</dbReference>
<protein>
    <recommendedName>
        <fullName evidence="1">Octanoyltransferase</fullName>
        <ecNumber evidence="1">2.3.1.181</ecNumber>
    </recommendedName>
    <alternativeName>
        <fullName evidence="1">Lipoate-protein ligase B</fullName>
    </alternativeName>
    <alternativeName>
        <fullName evidence="1">Lipoyl/octanoyl transferase</fullName>
    </alternativeName>
    <alternativeName>
        <fullName evidence="1">Octanoyl-[acyl-carrier-protein]-protein N-octanoyltransferase</fullName>
    </alternativeName>
</protein>
<evidence type="ECO:0000255" key="1">
    <source>
        <dbReference type="HAMAP-Rule" id="MF_00013"/>
    </source>
</evidence>
<evidence type="ECO:0000255" key="2">
    <source>
        <dbReference type="PROSITE-ProRule" id="PRU01067"/>
    </source>
</evidence>
<organism>
    <name type="scientific">Wolbachia pipientis wMel</name>
    <dbReference type="NCBI Taxonomy" id="163164"/>
    <lineage>
        <taxon>Bacteria</taxon>
        <taxon>Pseudomonadati</taxon>
        <taxon>Pseudomonadota</taxon>
        <taxon>Alphaproteobacteria</taxon>
        <taxon>Rickettsiales</taxon>
        <taxon>Anaplasmataceae</taxon>
        <taxon>Wolbachieae</taxon>
        <taxon>Wolbachia</taxon>
    </lineage>
</organism>
<reference key="1">
    <citation type="journal article" date="2004" name="PLoS Biol.">
        <title>Phylogenomics of the reproductive parasite Wolbachia pipientis wMel: a streamlined genome overrun by mobile genetic elements.</title>
        <authorList>
            <person name="Wu M."/>
            <person name="Sun L.V."/>
            <person name="Vamathevan J.J."/>
            <person name="Riegler M."/>
            <person name="DeBoy R.T."/>
            <person name="Brownlie J.C."/>
            <person name="McGraw E.A."/>
            <person name="Martin W."/>
            <person name="Esser C."/>
            <person name="Ahmadinejad N."/>
            <person name="Wiegand C."/>
            <person name="Madupu R."/>
            <person name="Beanan M.J."/>
            <person name="Brinkac L.M."/>
            <person name="Daugherty S.C."/>
            <person name="Durkin A.S."/>
            <person name="Kolonay J.F."/>
            <person name="Nelson W.C."/>
            <person name="Mohamoud Y."/>
            <person name="Lee P."/>
            <person name="Berry K.J."/>
            <person name="Young M.B."/>
            <person name="Utterback T.R."/>
            <person name="Weidman J.F."/>
            <person name="Nierman W.C."/>
            <person name="Paulsen I.T."/>
            <person name="Nelson K.E."/>
            <person name="Tettelin H."/>
            <person name="O'Neill S.L."/>
            <person name="Eisen J.A."/>
        </authorList>
    </citation>
    <scope>NUCLEOTIDE SEQUENCE [LARGE SCALE GENOMIC DNA]</scope>
</reference>
<keyword id="KW-0012">Acyltransferase</keyword>
<keyword id="KW-0963">Cytoplasm</keyword>
<keyword id="KW-0808">Transferase</keyword>
<gene>
    <name evidence="1" type="primary">lipB</name>
    <name type="ordered locus">WD_1014</name>
</gene>
<name>LIPB_WOLPM</name>
<feature type="chain" id="PRO_0000062895" description="Octanoyltransferase">
    <location>
        <begin position="1"/>
        <end position="205"/>
    </location>
</feature>
<feature type="domain" description="BPL/LPL catalytic" evidence="2">
    <location>
        <begin position="30"/>
        <end position="205"/>
    </location>
</feature>
<feature type="active site" description="Acyl-thioester intermediate" evidence="1">
    <location>
        <position position="171"/>
    </location>
</feature>
<feature type="binding site" evidence="1">
    <location>
        <begin position="68"/>
        <end position="75"/>
    </location>
    <ligand>
        <name>substrate</name>
    </ligand>
</feature>
<feature type="binding site" evidence="1">
    <location>
        <begin position="140"/>
        <end position="142"/>
    </location>
    <ligand>
        <name>substrate</name>
    </ligand>
</feature>
<feature type="binding site" evidence="1">
    <location>
        <begin position="153"/>
        <end position="155"/>
    </location>
    <ligand>
        <name>substrate</name>
    </ligand>
</feature>
<feature type="site" description="Lowers pKa of active site Cys" evidence="1">
    <location>
        <position position="137"/>
    </location>
</feature>
<proteinExistence type="inferred from homology"/>
<comment type="function">
    <text evidence="1">Catalyzes the transfer of endogenously produced octanoic acid from octanoyl-acyl-carrier-protein onto the lipoyl domains of lipoate-dependent enzymes. Lipoyl-ACP can also act as a substrate although octanoyl-ACP is likely to be the physiological substrate.</text>
</comment>
<comment type="catalytic activity">
    <reaction evidence="1">
        <text>octanoyl-[ACP] + L-lysyl-[protein] = N(6)-octanoyl-L-lysyl-[protein] + holo-[ACP] + H(+)</text>
        <dbReference type="Rhea" id="RHEA:17665"/>
        <dbReference type="Rhea" id="RHEA-COMP:9636"/>
        <dbReference type="Rhea" id="RHEA-COMP:9685"/>
        <dbReference type="Rhea" id="RHEA-COMP:9752"/>
        <dbReference type="Rhea" id="RHEA-COMP:9928"/>
        <dbReference type="ChEBI" id="CHEBI:15378"/>
        <dbReference type="ChEBI" id="CHEBI:29969"/>
        <dbReference type="ChEBI" id="CHEBI:64479"/>
        <dbReference type="ChEBI" id="CHEBI:78463"/>
        <dbReference type="ChEBI" id="CHEBI:78809"/>
        <dbReference type="EC" id="2.3.1.181"/>
    </reaction>
</comment>
<comment type="pathway">
    <text evidence="1">Protein modification; protein lipoylation via endogenous pathway; protein N(6)-(lipoyl)lysine from octanoyl-[acyl-carrier-protein]: step 1/2.</text>
</comment>
<comment type="subcellular location">
    <subcellularLocation>
        <location evidence="1">Cytoplasm</location>
    </subcellularLocation>
</comment>
<comment type="miscellaneous">
    <text evidence="1">In the reaction, the free carboxyl group of octanoic acid is attached via an amide linkage to the epsilon-amino group of a specific lysine residue of lipoyl domains of lipoate-dependent enzymes.</text>
</comment>
<comment type="similarity">
    <text evidence="1">Belongs to the LipB family.</text>
</comment>